<gene>
    <name evidence="1" type="primary">cbiO</name>
    <name type="ordered locus">SYNAS_30950</name>
    <name type="ORF">SYN_00209</name>
</gene>
<feature type="chain" id="PRO_0000288018" description="Cobalt import ATP-binding protein CbiO">
    <location>
        <begin position="1"/>
        <end position="280"/>
    </location>
</feature>
<feature type="domain" description="ABC transporter" evidence="1">
    <location>
        <begin position="2"/>
        <end position="236"/>
    </location>
</feature>
<feature type="binding site" evidence="1">
    <location>
        <begin position="36"/>
        <end position="43"/>
    </location>
    <ligand>
        <name>ATP</name>
        <dbReference type="ChEBI" id="CHEBI:30616"/>
    </ligand>
</feature>
<comment type="function">
    <text evidence="1">Part of the energy-coupling factor (ECF) transporter complex CbiMNOQ involved in cobalt import. Presumably responsible for energy coupling to the transport system.</text>
</comment>
<comment type="pathway">
    <text evidence="1">Cofactor biosynthesis; adenosylcobalamin biosynthesis.</text>
</comment>
<comment type="subunit">
    <text evidence="1">Forms an energy-coupling factor (ECF) transporter complex composed of an ATP-binding protein (A component, CbiO), a transmembrane protein (T component, CbiQ) and 2 possible substrate-capture proteins (S components, CbiM and CbiN) of unknown stoichimetry.</text>
</comment>
<comment type="subcellular location">
    <subcellularLocation>
        <location evidence="1">Cell inner membrane</location>
        <topology evidence="1">Peripheral membrane protein</topology>
    </subcellularLocation>
</comment>
<comment type="similarity">
    <text evidence="1">Belongs to the ABC transporter superfamily. Cobalt importer (TC 3.A.1.18.1) family.</text>
</comment>
<name>CBIO_SYNAS</name>
<reference key="1">
    <citation type="journal article" date="2007" name="Proc. Natl. Acad. Sci. U.S.A.">
        <title>The genome of Syntrophus aciditrophicus: life at the thermodynamic limit of microbial growth.</title>
        <authorList>
            <person name="McInerney M.J."/>
            <person name="Rohlin L."/>
            <person name="Mouttaki H."/>
            <person name="Kim U."/>
            <person name="Krupp R.S."/>
            <person name="Rios-Hernandez L."/>
            <person name="Sieber J."/>
            <person name="Struchtemeyer C.G."/>
            <person name="Bhattacharyya A."/>
            <person name="Campbell J.W."/>
            <person name="Gunsalus R.P."/>
        </authorList>
    </citation>
    <scope>NUCLEOTIDE SEQUENCE [LARGE SCALE GENOMIC DNA]</scope>
    <source>
        <strain>SB</strain>
    </source>
</reference>
<accession>Q2LY16</accession>
<dbReference type="EC" id="7.-.-.-" evidence="1"/>
<dbReference type="EMBL" id="CP000252">
    <property type="protein sequence ID" value="ABC78974.1"/>
    <property type="molecule type" value="Genomic_DNA"/>
</dbReference>
<dbReference type="RefSeq" id="WP_011418988.1">
    <property type="nucleotide sequence ID" value="NC_007759.1"/>
</dbReference>
<dbReference type="SMR" id="Q2LY16"/>
<dbReference type="STRING" id="56780.SYN_00209"/>
<dbReference type="KEGG" id="sat:SYN_00209"/>
<dbReference type="eggNOG" id="COG1122">
    <property type="taxonomic scope" value="Bacteria"/>
</dbReference>
<dbReference type="HOGENOM" id="CLU_000604_1_22_7"/>
<dbReference type="InParanoid" id="Q2LY16"/>
<dbReference type="OrthoDB" id="9809450at2"/>
<dbReference type="UniPathway" id="UPA00148"/>
<dbReference type="Proteomes" id="UP000001933">
    <property type="component" value="Chromosome"/>
</dbReference>
<dbReference type="GO" id="GO:0043190">
    <property type="term" value="C:ATP-binding cassette (ABC) transporter complex"/>
    <property type="evidence" value="ECO:0007669"/>
    <property type="project" value="TreeGrafter"/>
</dbReference>
<dbReference type="GO" id="GO:0005524">
    <property type="term" value="F:ATP binding"/>
    <property type="evidence" value="ECO:0007669"/>
    <property type="project" value="UniProtKB-KW"/>
</dbReference>
<dbReference type="GO" id="GO:0016887">
    <property type="term" value="F:ATP hydrolysis activity"/>
    <property type="evidence" value="ECO:0007669"/>
    <property type="project" value="InterPro"/>
</dbReference>
<dbReference type="GO" id="GO:0042626">
    <property type="term" value="F:ATPase-coupled transmembrane transporter activity"/>
    <property type="evidence" value="ECO:0007669"/>
    <property type="project" value="TreeGrafter"/>
</dbReference>
<dbReference type="GO" id="GO:0009236">
    <property type="term" value="P:cobalamin biosynthetic process"/>
    <property type="evidence" value="ECO:0007669"/>
    <property type="project" value="UniProtKB-UniPathway"/>
</dbReference>
<dbReference type="GO" id="GO:0006824">
    <property type="term" value="P:cobalt ion transport"/>
    <property type="evidence" value="ECO:0007669"/>
    <property type="project" value="UniProtKB-KW"/>
</dbReference>
<dbReference type="CDD" id="cd03225">
    <property type="entry name" value="ABC_cobalt_CbiO_domain1"/>
    <property type="match status" value="1"/>
</dbReference>
<dbReference type="FunFam" id="3.40.50.300:FF:000224">
    <property type="entry name" value="Energy-coupling factor transporter ATP-binding protein EcfA"/>
    <property type="match status" value="1"/>
</dbReference>
<dbReference type="Gene3D" id="3.40.50.300">
    <property type="entry name" value="P-loop containing nucleotide triphosphate hydrolases"/>
    <property type="match status" value="1"/>
</dbReference>
<dbReference type="InterPro" id="IPR003593">
    <property type="entry name" value="AAA+_ATPase"/>
</dbReference>
<dbReference type="InterPro" id="IPR003439">
    <property type="entry name" value="ABC_transporter-like_ATP-bd"/>
</dbReference>
<dbReference type="InterPro" id="IPR017871">
    <property type="entry name" value="ABC_transporter-like_CS"/>
</dbReference>
<dbReference type="InterPro" id="IPR015856">
    <property type="entry name" value="ABC_transpr_CbiO/EcfA_su"/>
</dbReference>
<dbReference type="InterPro" id="IPR050095">
    <property type="entry name" value="ECF_ABC_transporter_ATP-bd"/>
</dbReference>
<dbReference type="InterPro" id="IPR030947">
    <property type="entry name" value="EcfA_1"/>
</dbReference>
<dbReference type="InterPro" id="IPR027417">
    <property type="entry name" value="P-loop_NTPase"/>
</dbReference>
<dbReference type="NCBIfam" id="TIGR04520">
    <property type="entry name" value="ECF_ATPase_1"/>
    <property type="match status" value="1"/>
</dbReference>
<dbReference type="PANTHER" id="PTHR43553:SF24">
    <property type="entry name" value="ENERGY-COUPLING FACTOR TRANSPORTER ATP-BINDING PROTEIN ECFA1"/>
    <property type="match status" value="1"/>
</dbReference>
<dbReference type="PANTHER" id="PTHR43553">
    <property type="entry name" value="HEAVY METAL TRANSPORTER"/>
    <property type="match status" value="1"/>
</dbReference>
<dbReference type="Pfam" id="PF00005">
    <property type="entry name" value="ABC_tran"/>
    <property type="match status" value="1"/>
</dbReference>
<dbReference type="SMART" id="SM00382">
    <property type="entry name" value="AAA"/>
    <property type="match status" value="1"/>
</dbReference>
<dbReference type="SUPFAM" id="SSF52540">
    <property type="entry name" value="P-loop containing nucleoside triphosphate hydrolases"/>
    <property type="match status" value="1"/>
</dbReference>
<dbReference type="PROSITE" id="PS00211">
    <property type="entry name" value="ABC_TRANSPORTER_1"/>
    <property type="match status" value="1"/>
</dbReference>
<dbReference type="PROSITE" id="PS50893">
    <property type="entry name" value="ABC_TRANSPORTER_2"/>
    <property type="match status" value="1"/>
</dbReference>
<dbReference type="PROSITE" id="PS51246">
    <property type="entry name" value="CBIO"/>
    <property type="match status" value="1"/>
</dbReference>
<sequence length="280" mass="31164">MIEVRDLRFHYQEKERAVLDGVSMTLKDGEYVALIGANGCGKTTLVHHLNALMRPTSGVVSVDGLDTLDDRQVWEIRRRVGMVFQNPENQIVGMTIEEDIAFGPGNLGLPPAEIRRRVASSLELVGLESYGRRVPSALSGGEKRLVAIAGILAMEPRYIIFDEPTSYLDPASRQRVLALIAGLHKRGLGIIHITHNMDDILDVDRVLVMREGKIVRDDRPEIVLSQGDWLRQQGLGMPAATALLWRLKEMGVSVRTDILDFEDVCREIAAWKSHPVESVA</sequence>
<protein>
    <recommendedName>
        <fullName evidence="1">Cobalt import ATP-binding protein CbiO</fullName>
        <ecNumber evidence="1">7.-.-.-</ecNumber>
    </recommendedName>
    <alternativeName>
        <fullName evidence="1">Energy-coupling factor transporter ATP-binding protein CbiO</fullName>
        <shortName evidence="1">ECF transporter A component CbiO</shortName>
    </alternativeName>
</protein>
<keyword id="KW-0067">ATP-binding</keyword>
<keyword id="KW-0997">Cell inner membrane</keyword>
<keyword id="KW-1003">Cell membrane</keyword>
<keyword id="KW-0169">Cobalamin biosynthesis</keyword>
<keyword id="KW-0170">Cobalt</keyword>
<keyword id="KW-0171">Cobalt transport</keyword>
<keyword id="KW-0406">Ion transport</keyword>
<keyword id="KW-0472">Membrane</keyword>
<keyword id="KW-0547">Nucleotide-binding</keyword>
<keyword id="KW-1185">Reference proteome</keyword>
<keyword id="KW-1278">Translocase</keyword>
<keyword id="KW-0813">Transport</keyword>
<proteinExistence type="inferred from homology"/>
<evidence type="ECO:0000255" key="1">
    <source>
        <dbReference type="HAMAP-Rule" id="MF_01710"/>
    </source>
</evidence>
<organism>
    <name type="scientific">Syntrophus aciditrophicus (strain SB)</name>
    <dbReference type="NCBI Taxonomy" id="56780"/>
    <lineage>
        <taxon>Bacteria</taxon>
        <taxon>Pseudomonadati</taxon>
        <taxon>Thermodesulfobacteriota</taxon>
        <taxon>Syntrophia</taxon>
        <taxon>Syntrophales</taxon>
        <taxon>Syntrophaceae</taxon>
        <taxon>Syntrophus</taxon>
    </lineage>
</organism>